<dbReference type="EC" id="4.1.1.19" evidence="1"/>
<dbReference type="EMBL" id="CP000551">
    <property type="protein sequence ID" value="ABM69334.1"/>
    <property type="molecule type" value="Genomic_DNA"/>
</dbReference>
<dbReference type="RefSeq" id="WP_011817524.1">
    <property type="nucleotide sequence ID" value="NC_008816.1"/>
</dbReference>
<dbReference type="SMR" id="A2BNH3"/>
<dbReference type="STRING" id="146891.A9601_00461"/>
<dbReference type="KEGG" id="pmb:A9601_00461"/>
<dbReference type="eggNOG" id="COG1166">
    <property type="taxonomic scope" value="Bacteria"/>
</dbReference>
<dbReference type="HOGENOM" id="CLU_027243_1_0_3"/>
<dbReference type="OrthoDB" id="9802658at2"/>
<dbReference type="UniPathway" id="UPA00186">
    <property type="reaction ID" value="UER00284"/>
</dbReference>
<dbReference type="Proteomes" id="UP000002590">
    <property type="component" value="Chromosome"/>
</dbReference>
<dbReference type="GO" id="GO:0008792">
    <property type="term" value="F:arginine decarboxylase activity"/>
    <property type="evidence" value="ECO:0007669"/>
    <property type="project" value="UniProtKB-UniRule"/>
</dbReference>
<dbReference type="GO" id="GO:0046872">
    <property type="term" value="F:metal ion binding"/>
    <property type="evidence" value="ECO:0007669"/>
    <property type="project" value="UniProtKB-KW"/>
</dbReference>
<dbReference type="GO" id="GO:0006527">
    <property type="term" value="P:arginine catabolic process"/>
    <property type="evidence" value="ECO:0007669"/>
    <property type="project" value="InterPro"/>
</dbReference>
<dbReference type="GO" id="GO:0008295">
    <property type="term" value="P:spermidine biosynthetic process"/>
    <property type="evidence" value="ECO:0007669"/>
    <property type="project" value="UniProtKB-UniRule"/>
</dbReference>
<dbReference type="CDD" id="cd06830">
    <property type="entry name" value="PLPDE_III_ADC"/>
    <property type="match status" value="1"/>
</dbReference>
<dbReference type="Gene3D" id="1.20.58.930">
    <property type="match status" value="1"/>
</dbReference>
<dbReference type="Gene3D" id="3.20.20.10">
    <property type="entry name" value="Alanine racemase"/>
    <property type="match status" value="1"/>
</dbReference>
<dbReference type="Gene3D" id="2.40.37.10">
    <property type="entry name" value="Lyase, Ornithine Decarboxylase, Chain A, domain 1"/>
    <property type="match status" value="1"/>
</dbReference>
<dbReference type="HAMAP" id="MF_01417">
    <property type="entry name" value="SpeA"/>
    <property type="match status" value="1"/>
</dbReference>
<dbReference type="InterPro" id="IPR009006">
    <property type="entry name" value="Ala_racemase/Decarboxylase_C"/>
</dbReference>
<dbReference type="InterPro" id="IPR040634">
    <property type="entry name" value="Arg_decarb_HB"/>
</dbReference>
<dbReference type="InterPro" id="IPR041128">
    <property type="entry name" value="Arg_decarbox_C"/>
</dbReference>
<dbReference type="InterPro" id="IPR002985">
    <property type="entry name" value="Arg_decrbxlase"/>
</dbReference>
<dbReference type="InterPro" id="IPR022657">
    <property type="entry name" value="De-COase2_CS"/>
</dbReference>
<dbReference type="InterPro" id="IPR022644">
    <property type="entry name" value="De-COase2_N"/>
</dbReference>
<dbReference type="InterPro" id="IPR022653">
    <property type="entry name" value="De-COase2_pyr-phos_BS"/>
</dbReference>
<dbReference type="InterPro" id="IPR000183">
    <property type="entry name" value="Orn/DAP/Arg_de-COase"/>
</dbReference>
<dbReference type="InterPro" id="IPR029066">
    <property type="entry name" value="PLP-binding_barrel"/>
</dbReference>
<dbReference type="NCBIfam" id="NF003763">
    <property type="entry name" value="PRK05354.1"/>
    <property type="match status" value="1"/>
</dbReference>
<dbReference type="NCBIfam" id="TIGR01273">
    <property type="entry name" value="speA"/>
    <property type="match status" value="1"/>
</dbReference>
<dbReference type="PANTHER" id="PTHR43295">
    <property type="entry name" value="ARGININE DECARBOXYLASE"/>
    <property type="match status" value="1"/>
</dbReference>
<dbReference type="PANTHER" id="PTHR43295:SF9">
    <property type="entry name" value="BIOSYNTHETIC ARGININE DECARBOXYLASE"/>
    <property type="match status" value="1"/>
</dbReference>
<dbReference type="Pfam" id="PF17810">
    <property type="entry name" value="Arg_decarb_HB"/>
    <property type="match status" value="1"/>
</dbReference>
<dbReference type="Pfam" id="PF17944">
    <property type="entry name" value="Arg_decarbox_C"/>
    <property type="match status" value="1"/>
</dbReference>
<dbReference type="Pfam" id="PF02784">
    <property type="entry name" value="Orn_Arg_deC_N"/>
    <property type="match status" value="1"/>
</dbReference>
<dbReference type="PIRSF" id="PIRSF001336">
    <property type="entry name" value="Arg_decrbxlase"/>
    <property type="match status" value="1"/>
</dbReference>
<dbReference type="PRINTS" id="PR01180">
    <property type="entry name" value="ARGDCRBXLASE"/>
</dbReference>
<dbReference type="PRINTS" id="PR01179">
    <property type="entry name" value="ODADCRBXLASE"/>
</dbReference>
<dbReference type="SUPFAM" id="SSF50621">
    <property type="entry name" value="Alanine racemase C-terminal domain-like"/>
    <property type="match status" value="1"/>
</dbReference>
<dbReference type="SUPFAM" id="SSF51419">
    <property type="entry name" value="PLP-binding barrel"/>
    <property type="match status" value="1"/>
</dbReference>
<dbReference type="PROSITE" id="PS00878">
    <property type="entry name" value="ODR_DC_2_1"/>
    <property type="match status" value="1"/>
</dbReference>
<dbReference type="PROSITE" id="PS00879">
    <property type="entry name" value="ODR_DC_2_2"/>
    <property type="match status" value="1"/>
</dbReference>
<comment type="function">
    <text evidence="1">Catalyzes the biosynthesis of agmatine from arginine.</text>
</comment>
<comment type="catalytic activity">
    <reaction evidence="1">
        <text>L-arginine + H(+) = agmatine + CO2</text>
        <dbReference type="Rhea" id="RHEA:17641"/>
        <dbReference type="ChEBI" id="CHEBI:15378"/>
        <dbReference type="ChEBI" id="CHEBI:16526"/>
        <dbReference type="ChEBI" id="CHEBI:32682"/>
        <dbReference type="ChEBI" id="CHEBI:58145"/>
        <dbReference type="EC" id="4.1.1.19"/>
    </reaction>
</comment>
<comment type="cofactor">
    <cofactor evidence="1">
        <name>Mg(2+)</name>
        <dbReference type="ChEBI" id="CHEBI:18420"/>
    </cofactor>
</comment>
<comment type="cofactor">
    <cofactor evidence="1">
        <name>pyridoxal 5'-phosphate</name>
        <dbReference type="ChEBI" id="CHEBI:597326"/>
    </cofactor>
</comment>
<comment type="pathway">
    <text evidence="1">Amine and polyamine biosynthesis; agmatine biosynthesis; agmatine from L-arginine: step 1/1.</text>
</comment>
<comment type="similarity">
    <text evidence="1">Belongs to the Orn/Lys/Arg decarboxylase class-II family. SpeA subfamily.</text>
</comment>
<feature type="chain" id="PRO_1000024262" description="Biosynthetic arginine decarboxylase">
    <location>
        <begin position="1"/>
        <end position="648"/>
    </location>
</feature>
<feature type="binding site" evidence="1">
    <location>
        <begin position="291"/>
        <end position="301"/>
    </location>
    <ligand>
        <name>substrate</name>
    </ligand>
</feature>
<feature type="modified residue" description="N6-(pyridoxal phosphate)lysine" evidence="1">
    <location>
        <position position="109"/>
    </location>
</feature>
<name>SPEA_PROMS</name>
<reference key="1">
    <citation type="journal article" date="2007" name="PLoS Genet.">
        <title>Patterns and implications of gene gain and loss in the evolution of Prochlorococcus.</title>
        <authorList>
            <person name="Kettler G.C."/>
            <person name="Martiny A.C."/>
            <person name="Huang K."/>
            <person name="Zucker J."/>
            <person name="Coleman M.L."/>
            <person name="Rodrigue S."/>
            <person name="Chen F."/>
            <person name="Lapidus A."/>
            <person name="Ferriera S."/>
            <person name="Johnson J."/>
            <person name="Steglich C."/>
            <person name="Church G.M."/>
            <person name="Richardson P."/>
            <person name="Chisholm S.W."/>
        </authorList>
    </citation>
    <scope>NUCLEOTIDE SEQUENCE [LARGE SCALE GENOMIC DNA]</scope>
    <source>
        <strain>AS9601</strain>
    </source>
</reference>
<evidence type="ECO:0000255" key="1">
    <source>
        <dbReference type="HAMAP-Rule" id="MF_01417"/>
    </source>
</evidence>
<sequence length="648" mass="73411">MTNFEPKKFKNIWTIEDSISSYNIDKWGDKYFSINSKGNISVTKDIKSENKIDLFKLVKELKSREINPPLIIRFNDILKDRINALHDSFLKAIKTYKYKNIYQGVFPVKCNQQKNVLEKIIEFGSQWNFGLEVGSKSELLIGLALLENQNSLLICNGYKDKKYIEIATLARKLGKNPIIVIEQRDEVKRIIQAVQELKATPLIGIRAKLSSKSSGRWGKSIGDNSKFGLSIPEIMLTIKELKEANLINEMKLLHFHIGSQISDIAVIKDALQEASQIYVELCKLGAPMQYIDVGGGLGIDFDGTKTSSNTSTNYSLQNYANDVIATIKDSCELNNIKHPTIISESGRAIISHCSVLIFNVLGTSHVSSKLQIFDKKNQQLIISNLLDTFYELKKLKNKKINLSQIIELWNDAKKFKEDCLVAFRLGFLSLAERAYAEELTWACAKEISNNLNNDEINHPDLSEITETLASTYYANLSIFKSIPDSWAINQIFPIVPIHRHLEEPFCKGNFADLTCDSDGKLNNFIDNGKIKSLLNLHKPEEDKDYLIGIFMTGAYQEALGNLHNLFGSTNVVHIDINQDNSYKVRNIIKEDSKSEILQLLDYSSASLVESIRINTESAIDQKKLTIEEARKLMDQIEISLRKSSYLSE</sequence>
<keyword id="KW-0210">Decarboxylase</keyword>
<keyword id="KW-0456">Lyase</keyword>
<keyword id="KW-0460">Magnesium</keyword>
<keyword id="KW-0479">Metal-binding</keyword>
<keyword id="KW-0620">Polyamine biosynthesis</keyword>
<keyword id="KW-0663">Pyridoxal phosphate</keyword>
<keyword id="KW-0745">Spermidine biosynthesis</keyword>
<accession>A2BNH3</accession>
<proteinExistence type="inferred from homology"/>
<organism>
    <name type="scientific">Prochlorococcus marinus (strain AS9601)</name>
    <dbReference type="NCBI Taxonomy" id="146891"/>
    <lineage>
        <taxon>Bacteria</taxon>
        <taxon>Bacillati</taxon>
        <taxon>Cyanobacteriota</taxon>
        <taxon>Cyanophyceae</taxon>
        <taxon>Synechococcales</taxon>
        <taxon>Prochlorococcaceae</taxon>
        <taxon>Prochlorococcus</taxon>
    </lineage>
</organism>
<gene>
    <name evidence="1" type="primary">speA</name>
    <name type="ordered locus">A9601_00461</name>
</gene>
<protein>
    <recommendedName>
        <fullName evidence="1">Biosynthetic arginine decarboxylase</fullName>
        <shortName evidence="1">ADC</shortName>
        <ecNumber evidence="1">4.1.1.19</ecNumber>
    </recommendedName>
</protein>